<dbReference type="EC" id="4.1.3.39" evidence="1"/>
<dbReference type="EMBL" id="CP001164">
    <property type="protein sequence ID" value="ACI37679.1"/>
    <property type="molecule type" value="Genomic_DNA"/>
</dbReference>
<dbReference type="RefSeq" id="WP_001013525.1">
    <property type="nucleotide sequence ID" value="NC_011353.1"/>
</dbReference>
<dbReference type="SMR" id="B5Z2Q7"/>
<dbReference type="KEGG" id="ecf:ECH74115_0427"/>
<dbReference type="HOGENOM" id="CLU_049173_0_0_6"/>
<dbReference type="UniPathway" id="UPA00714"/>
<dbReference type="GO" id="GO:0003852">
    <property type="term" value="F:2-isopropylmalate synthase activity"/>
    <property type="evidence" value="ECO:0007669"/>
    <property type="project" value="TreeGrafter"/>
</dbReference>
<dbReference type="GO" id="GO:0008701">
    <property type="term" value="F:4-hydroxy-2-oxovalerate aldolase activity"/>
    <property type="evidence" value="ECO:0007669"/>
    <property type="project" value="UniProtKB-UniRule"/>
</dbReference>
<dbReference type="GO" id="GO:0030145">
    <property type="term" value="F:manganese ion binding"/>
    <property type="evidence" value="ECO:0007669"/>
    <property type="project" value="UniProtKB-UniRule"/>
</dbReference>
<dbReference type="GO" id="GO:0019380">
    <property type="term" value="P:3-phenylpropionate catabolic process"/>
    <property type="evidence" value="ECO:0007669"/>
    <property type="project" value="UniProtKB-UniRule"/>
</dbReference>
<dbReference type="GO" id="GO:0009098">
    <property type="term" value="P:L-leucine biosynthetic process"/>
    <property type="evidence" value="ECO:0007669"/>
    <property type="project" value="TreeGrafter"/>
</dbReference>
<dbReference type="CDD" id="cd07943">
    <property type="entry name" value="DRE_TIM_HOA"/>
    <property type="match status" value="1"/>
</dbReference>
<dbReference type="FunFam" id="1.10.8.60:FF:000042">
    <property type="entry name" value="4-hydroxy-2-oxovalerate aldolase"/>
    <property type="match status" value="1"/>
</dbReference>
<dbReference type="FunFam" id="3.20.20.70:FF:000072">
    <property type="entry name" value="4-hydroxy-2-oxovalerate aldolase"/>
    <property type="match status" value="1"/>
</dbReference>
<dbReference type="Gene3D" id="1.10.8.60">
    <property type="match status" value="1"/>
</dbReference>
<dbReference type="Gene3D" id="3.20.20.70">
    <property type="entry name" value="Aldolase class I"/>
    <property type="match status" value="1"/>
</dbReference>
<dbReference type="HAMAP" id="MF_01656">
    <property type="entry name" value="HOA"/>
    <property type="match status" value="1"/>
</dbReference>
<dbReference type="InterPro" id="IPR050073">
    <property type="entry name" value="2-IPM_HCS-like"/>
</dbReference>
<dbReference type="InterPro" id="IPR017629">
    <property type="entry name" value="4OH_2_O-val_aldolase"/>
</dbReference>
<dbReference type="InterPro" id="IPR013785">
    <property type="entry name" value="Aldolase_TIM"/>
</dbReference>
<dbReference type="InterPro" id="IPR012425">
    <property type="entry name" value="DmpG_comm"/>
</dbReference>
<dbReference type="InterPro" id="IPR035685">
    <property type="entry name" value="DRE_TIM_HOA"/>
</dbReference>
<dbReference type="InterPro" id="IPR000891">
    <property type="entry name" value="PYR_CT"/>
</dbReference>
<dbReference type="NCBIfam" id="TIGR03217">
    <property type="entry name" value="4OH_2_O_val_ald"/>
    <property type="match status" value="1"/>
</dbReference>
<dbReference type="NCBIfam" id="NF006049">
    <property type="entry name" value="PRK08195.1"/>
    <property type="match status" value="1"/>
</dbReference>
<dbReference type="PANTHER" id="PTHR10277:SF9">
    <property type="entry name" value="2-ISOPROPYLMALATE SYNTHASE 1, CHLOROPLASTIC-RELATED"/>
    <property type="match status" value="1"/>
</dbReference>
<dbReference type="PANTHER" id="PTHR10277">
    <property type="entry name" value="HOMOCITRATE SYNTHASE-RELATED"/>
    <property type="match status" value="1"/>
</dbReference>
<dbReference type="Pfam" id="PF07836">
    <property type="entry name" value="DmpG_comm"/>
    <property type="match status" value="1"/>
</dbReference>
<dbReference type="Pfam" id="PF00682">
    <property type="entry name" value="HMGL-like"/>
    <property type="match status" value="1"/>
</dbReference>
<dbReference type="SUPFAM" id="SSF51569">
    <property type="entry name" value="Aldolase"/>
    <property type="match status" value="1"/>
</dbReference>
<dbReference type="SUPFAM" id="SSF89000">
    <property type="entry name" value="post-HMGL domain-like"/>
    <property type="match status" value="1"/>
</dbReference>
<dbReference type="PROSITE" id="PS50991">
    <property type="entry name" value="PYR_CT"/>
    <property type="match status" value="1"/>
</dbReference>
<organism>
    <name type="scientific">Escherichia coli O157:H7 (strain EC4115 / EHEC)</name>
    <dbReference type="NCBI Taxonomy" id="444450"/>
    <lineage>
        <taxon>Bacteria</taxon>
        <taxon>Pseudomonadati</taxon>
        <taxon>Pseudomonadota</taxon>
        <taxon>Gammaproteobacteria</taxon>
        <taxon>Enterobacterales</taxon>
        <taxon>Enterobacteriaceae</taxon>
        <taxon>Escherichia</taxon>
    </lineage>
</organism>
<keyword id="KW-0058">Aromatic hydrocarbons catabolism</keyword>
<keyword id="KW-0456">Lyase</keyword>
<keyword id="KW-0464">Manganese</keyword>
<keyword id="KW-0479">Metal-binding</keyword>
<feature type="chain" id="PRO_0000387829" description="4-hydroxy-2-oxovalerate aldolase">
    <location>
        <begin position="1"/>
        <end position="337"/>
    </location>
</feature>
<feature type="domain" description="Pyruvate carboxyltransferase" evidence="1">
    <location>
        <begin position="6"/>
        <end position="258"/>
    </location>
</feature>
<feature type="active site" description="Proton acceptor" evidence="1">
    <location>
        <position position="18"/>
    </location>
</feature>
<feature type="binding site" evidence="1">
    <location>
        <begin position="14"/>
        <end position="15"/>
    </location>
    <ligand>
        <name>substrate</name>
    </ligand>
</feature>
<feature type="binding site" evidence="1">
    <location>
        <position position="15"/>
    </location>
    <ligand>
        <name>Mn(2+)</name>
        <dbReference type="ChEBI" id="CHEBI:29035"/>
    </ligand>
</feature>
<feature type="binding site" evidence="1">
    <location>
        <position position="168"/>
    </location>
    <ligand>
        <name>substrate</name>
    </ligand>
</feature>
<feature type="binding site" evidence="1">
    <location>
        <position position="197"/>
    </location>
    <ligand>
        <name>Mn(2+)</name>
        <dbReference type="ChEBI" id="CHEBI:29035"/>
    </ligand>
</feature>
<feature type="binding site" evidence="1">
    <location>
        <position position="197"/>
    </location>
    <ligand>
        <name>substrate</name>
    </ligand>
</feature>
<feature type="binding site" evidence="1">
    <location>
        <position position="199"/>
    </location>
    <ligand>
        <name>Mn(2+)</name>
        <dbReference type="ChEBI" id="CHEBI:29035"/>
    </ligand>
</feature>
<feature type="binding site" evidence="1">
    <location>
        <position position="288"/>
    </location>
    <ligand>
        <name>substrate</name>
    </ligand>
</feature>
<feature type="site" description="Transition state stabilizer" evidence="1">
    <location>
        <position position="14"/>
    </location>
</feature>
<comment type="function">
    <text evidence="1">Catalyzes the retro-aldol cleavage of 4-hydroxy-2-oxopentanoate to pyruvate and acetaldehyde. Is involved in the meta-cleavage pathway for the degradation of aromatic compounds.</text>
</comment>
<comment type="catalytic activity">
    <reaction evidence="1">
        <text>(S)-4-hydroxy-2-oxopentanoate = acetaldehyde + pyruvate</text>
        <dbReference type="Rhea" id="RHEA:22624"/>
        <dbReference type="ChEBI" id="CHEBI:15343"/>
        <dbReference type="ChEBI" id="CHEBI:15361"/>
        <dbReference type="ChEBI" id="CHEBI:73143"/>
        <dbReference type="EC" id="4.1.3.39"/>
    </reaction>
</comment>
<comment type="pathway">
    <text evidence="1">Aromatic compound metabolism; 3-phenylpropanoate degradation.</text>
</comment>
<comment type="subunit">
    <text evidence="1">Interacts with MhpF.</text>
</comment>
<comment type="similarity">
    <text evidence="1">Belongs to the 4-hydroxy-2-oxovalerate aldolase family.</text>
</comment>
<reference key="1">
    <citation type="journal article" date="2011" name="Proc. Natl. Acad. Sci. U.S.A.">
        <title>Genomic anatomy of Escherichia coli O157:H7 outbreaks.</title>
        <authorList>
            <person name="Eppinger M."/>
            <person name="Mammel M.K."/>
            <person name="Leclerc J.E."/>
            <person name="Ravel J."/>
            <person name="Cebula T.A."/>
        </authorList>
    </citation>
    <scope>NUCLEOTIDE SEQUENCE [LARGE SCALE GENOMIC DNA]</scope>
    <source>
        <strain>EC4115 / EHEC</strain>
    </source>
</reference>
<protein>
    <recommendedName>
        <fullName evidence="1">4-hydroxy-2-oxovalerate aldolase</fullName>
        <shortName evidence="1">HOA</shortName>
        <ecNumber evidence="1">4.1.3.39</ecNumber>
    </recommendedName>
    <alternativeName>
        <fullName evidence="1">4-hydroxy-2-keto-pentanoic acid aldolase</fullName>
    </alternativeName>
    <alternativeName>
        <fullName evidence="1">4-hydroxy-2-oxopentanoate aldolase</fullName>
    </alternativeName>
</protein>
<gene>
    <name evidence="1" type="primary">mhpE</name>
    <name type="ordered locus">ECH74115_0427</name>
</gene>
<proteinExistence type="inferred from homology"/>
<evidence type="ECO:0000255" key="1">
    <source>
        <dbReference type="HAMAP-Rule" id="MF_01656"/>
    </source>
</evidence>
<accession>B5Z2Q7</accession>
<name>HOA_ECO5E</name>
<sequence>MNGKKLYISDVTLRDGMHAIRHRYSLENVRQIAKALDDARVDSIEVAHGDGLQGSSFNYGFGAHSDLEWIEAAADVVKHAKIATLLLPGIGTIHDLKNAWQAGARVVRVATHCTEADVSAQHIQYARELGMDTVGFLMMSHMTTPENLAKQAKLMEGYGATCIYVVDSGGAMNMSDIRDRFRALKAVLKPETQTGMHAHHNLSLGVANSIAAVEEGCDRIDASLAGMGAGAGNAPLEVFIAAVDKLGWQHGADLYALMDAADDLVRPLQDRPVRVDRETLALGYAGVYSSFLRHCETAAARYGLSAVDILVELGKRRMVGGQEDMIVDVALDLRNNK</sequence>